<proteinExistence type="inferred from homology"/>
<dbReference type="EC" id="2.1.2.3" evidence="1"/>
<dbReference type="EC" id="3.5.4.10" evidence="1"/>
<dbReference type="EMBL" id="CP000644">
    <property type="protein sequence ID" value="ABO91420.1"/>
    <property type="molecule type" value="Genomic_DNA"/>
</dbReference>
<dbReference type="RefSeq" id="WP_005318934.1">
    <property type="nucleotide sequence ID" value="NC_009348.1"/>
</dbReference>
<dbReference type="SMR" id="A4SR98"/>
<dbReference type="STRING" id="29491.GCA_000820065_04345"/>
<dbReference type="KEGG" id="asa:ASA_3451"/>
<dbReference type="PATRIC" id="fig|382245.13.peg.3441"/>
<dbReference type="eggNOG" id="COG0138">
    <property type="taxonomic scope" value="Bacteria"/>
</dbReference>
<dbReference type="HOGENOM" id="CLU_016316_5_2_6"/>
<dbReference type="UniPathway" id="UPA00074">
    <property type="reaction ID" value="UER00133"/>
</dbReference>
<dbReference type="UniPathway" id="UPA00074">
    <property type="reaction ID" value="UER00135"/>
</dbReference>
<dbReference type="Proteomes" id="UP000000225">
    <property type="component" value="Chromosome"/>
</dbReference>
<dbReference type="GO" id="GO:0005829">
    <property type="term" value="C:cytosol"/>
    <property type="evidence" value="ECO:0007669"/>
    <property type="project" value="TreeGrafter"/>
</dbReference>
<dbReference type="GO" id="GO:0003937">
    <property type="term" value="F:IMP cyclohydrolase activity"/>
    <property type="evidence" value="ECO:0007669"/>
    <property type="project" value="UniProtKB-UniRule"/>
</dbReference>
<dbReference type="GO" id="GO:0004643">
    <property type="term" value="F:phosphoribosylaminoimidazolecarboxamide formyltransferase activity"/>
    <property type="evidence" value="ECO:0007669"/>
    <property type="project" value="UniProtKB-UniRule"/>
</dbReference>
<dbReference type="GO" id="GO:0006189">
    <property type="term" value="P:'de novo' IMP biosynthetic process"/>
    <property type="evidence" value="ECO:0007669"/>
    <property type="project" value="UniProtKB-UniRule"/>
</dbReference>
<dbReference type="CDD" id="cd01421">
    <property type="entry name" value="IMPCH"/>
    <property type="match status" value="1"/>
</dbReference>
<dbReference type="FunFam" id="3.40.140.20:FF:000001">
    <property type="entry name" value="Bifunctional purine biosynthesis protein PurH"/>
    <property type="match status" value="1"/>
</dbReference>
<dbReference type="FunFam" id="3.40.140.20:FF:000002">
    <property type="entry name" value="Bifunctional purine biosynthesis protein PurH"/>
    <property type="match status" value="1"/>
</dbReference>
<dbReference type="FunFam" id="3.40.50.1380:FF:000001">
    <property type="entry name" value="Bifunctional purine biosynthesis protein PurH"/>
    <property type="match status" value="1"/>
</dbReference>
<dbReference type="Gene3D" id="3.40.140.20">
    <property type="match status" value="2"/>
</dbReference>
<dbReference type="Gene3D" id="3.40.50.1380">
    <property type="entry name" value="Methylglyoxal synthase-like domain"/>
    <property type="match status" value="1"/>
</dbReference>
<dbReference type="HAMAP" id="MF_00139">
    <property type="entry name" value="PurH"/>
    <property type="match status" value="1"/>
</dbReference>
<dbReference type="InterPro" id="IPR024051">
    <property type="entry name" value="AICAR_Tfase_dup_dom_sf"/>
</dbReference>
<dbReference type="InterPro" id="IPR016193">
    <property type="entry name" value="Cytidine_deaminase-like"/>
</dbReference>
<dbReference type="InterPro" id="IPR011607">
    <property type="entry name" value="MGS-like_dom"/>
</dbReference>
<dbReference type="InterPro" id="IPR036914">
    <property type="entry name" value="MGS-like_dom_sf"/>
</dbReference>
<dbReference type="InterPro" id="IPR002695">
    <property type="entry name" value="PurH-like"/>
</dbReference>
<dbReference type="NCBIfam" id="NF002049">
    <property type="entry name" value="PRK00881.1"/>
    <property type="match status" value="1"/>
</dbReference>
<dbReference type="NCBIfam" id="TIGR00355">
    <property type="entry name" value="purH"/>
    <property type="match status" value="1"/>
</dbReference>
<dbReference type="PANTHER" id="PTHR11692:SF0">
    <property type="entry name" value="BIFUNCTIONAL PURINE BIOSYNTHESIS PROTEIN ATIC"/>
    <property type="match status" value="1"/>
</dbReference>
<dbReference type="PANTHER" id="PTHR11692">
    <property type="entry name" value="BIFUNCTIONAL PURINE BIOSYNTHESIS PROTEIN PURH"/>
    <property type="match status" value="1"/>
</dbReference>
<dbReference type="Pfam" id="PF01808">
    <property type="entry name" value="AICARFT_IMPCHas"/>
    <property type="match status" value="1"/>
</dbReference>
<dbReference type="Pfam" id="PF02142">
    <property type="entry name" value="MGS"/>
    <property type="match status" value="1"/>
</dbReference>
<dbReference type="PIRSF" id="PIRSF000414">
    <property type="entry name" value="AICARFT_IMPCHas"/>
    <property type="match status" value="1"/>
</dbReference>
<dbReference type="SMART" id="SM00798">
    <property type="entry name" value="AICARFT_IMPCHas"/>
    <property type="match status" value="1"/>
</dbReference>
<dbReference type="SMART" id="SM00851">
    <property type="entry name" value="MGS"/>
    <property type="match status" value="1"/>
</dbReference>
<dbReference type="SUPFAM" id="SSF53927">
    <property type="entry name" value="Cytidine deaminase-like"/>
    <property type="match status" value="1"/>
</dbReference>
<dbReference type="SUPFAM" id="SSF52335">
    <property type="entry name" value="Methylglyoxal synthase-like"/>
    <property type="match status" value="1"/>
</dbReference>
<dbReference type="PROSITE" id="PS51855">
    <property type="entry name" value="MGS"/>
    <property type="match status" value="1"/>
</dbReference>
<comment type="catalytic activity">
    <reaction evidence="1">
        <text>(6R)-10-formyltetrahydrofolate + 5-amino-1-(5-phospho-beta-D-ribosyl)imidazole-4-carboxamide = 5-formamido-1-(5-phospho-D-ribosyl)imidazole-4-carboxamide + (6S)-5,6,7,8-tetrahydrofolate</text>
        <dbReference type="Rhea" id="RHEA:22192"/>
        <dbReference type="ChEBI" id="CHEBI:57453"/>
        <dbReference type="ChEBI" id="CHEBI:58467"/>
        <dbReference type="ChEBI" id="CHEBI:58475"/>
        <dbReference type="ChEBI" id="CHEBI:195366"/>
        <dbReference type="EC" id="2.1.2.3"/>
    </reaction>
</comment>
<comment type="catalytic activity">
    <reaction evidence="1">
        <text>IMP + H2O = 5-formamido-1-(5-phospho-D-ribosyl)imidazole-4-carboxamide</text>
        <dbReference type="Rhea" id="RHEA:18445"/>
        <dbReference type="ChEBI" id="CHEBI:15377"/>
        <dbReference type="ChEBI" id="CHEBI:58053"/>
        <dbReference type="ChEBI" id="CHEBI:58467"/>
        <dbReference type="EC" id="3.5.4.10"/>
    </reaction>
</comment>
<comment type="pathway">
    <text evidence="1">Purine metabolism; IMP biosynthesis via de novo pathway; 5-formamido-1-(5-phospho-D-ribosyl)imidazole-4-carboxamide from 5-amino-1-(5-phospho-D-ribosyl)imidazole-4-carboxamide (10-formyl THF route): step 1/1.</text>
</comment>
<comment type="pathway">
    <text evidence="1">Purine metabolism; IMP biosynthesis via de novo pathway; IMP from 5-formamido-1-(5-phospho-D-ribosyl)imidazole-4-carboxamide: step 1/1.</text>
</comment>
<comment type="domain">
    <text evidence="1">The IMP cyclohydrolase activity resides in the N-terminal region.</text>
</comment>
<comment type="similarity">
    <text evidence="1">Belongs to the PurH family.</text>
</comment>
<name>PUR9_AERS4</name>
<accession>A4SR98</accession>
<protein>
    <recommendedName>
        <fullName evidence="1">Bifunctional purine biosynthesis protein PurH</fullName>
    </recommendedName>
    <domain>
        <recommendedName>
            <fullName evidence="1">Phosphoribosylaminoimidazolecarboxamide formyltransferase</fullName>
            <ecNumber evidence="1">2.1.2.3</ecNumber>
        </recommendedName>
        <alternativeName>
            <fullName evidence="1">AICAR transformylase</fullName>
        </alternativeName>
    </domain>
    <domain>
        <recommendedName>
            <fullName evidence="1">IMP cyclohydrolase</fullName>
            <ecNumber evidence="1">3.5.4.10</ecNumber>
        </recommendedName>
        <alternativeName>
            <fullName evidence="1">ATIC</fullName>
        </alternativeName>
        <alternativeName>
            <fullName evidence="1">IMP synthase</fullName>
        </alternativeName>
        <alternativeName>
            <fullName evidence="1">Inosinicase</fullName>
        </alternativeName>
    </domain>
</protein>
<feature type="chain" id="PRO_1000018833" description="Bifunctional purine biosynthesis protein PurH">
    <location>
        <begin position="1"/>
        <end position="530"/>
    </location>
</feature>
<feature type="domain" description="MGS-like" evidence="2">
    <location>
        <begin position="1"/>
        <end position="148"/>
    </location>
</feature>
<gene>
    <name evidence="1" type="primary">purH</name>
    <name type="ordered locus">ASA_3451</name>
</gene>
<evidence type="ECO:0000255" key="1">
    <source>
        <dbReference type="HAMAP-Rule" id="MF_00139"/>
    </source>
</evidence>
<evidence type="ECO:0000255" key="2">
    <source>
        <dbReference type="PROSITE-ProRule" id="PRU01202"/>
    </source>
</evidence>
<reference key="1">
    <citation type="journal article" date="2008" name="BMC Genomics">
        <title>The genome of Aeromonas salmonicida subsp. salmonicida A449: insights into the evolution of a fish pathogen.</title>
        <authorList>
            <person name="Reith M.E."/>
            <person name="Singh R.K."/>
            <person name="Curtis B."/>
            <person name="Boyd J.M."/>
            <person name="Bouevitch A."/>
            <person name="Kimball J."/>
            <person name="Munholland J."/>
            <person name="Murphy C."/>
            <person name="Sarty D."/>
            <person name="Williams J."/>
            <person name="Nash J.H."/>
            <person name="Johnson S.C."/>
            <person name="Brown L.L."/>
        </authorList>
    </citation>
    <scope>NUCLEOTIDE SEQUENCE [LARGE SCALE GENOMIC DNA]</scope>
    <source>
        <strain>A449</strain>
    </source>
</reference>
<keyword id="KW-0378">Hydrolase</keyword>
<keyword id="KW-0511">Multifunctional enzyme</keyword>
<keyword id="KW-0658">Purine biosynthesis</keyword>
<keyword id="KW-0808">Transferase</keyword>
<organism>
    <name type="scientific">Aeromonas salmonicida (strain A449)</name>
    <dbReference type="NCBI Taxonomy" id="382245"/>
    <lineage>
        <taxon>Bacteria</taxon>
        <taxon>Pseudomonadati</taxon>
        <taxon>Pseudomonadota</taxon>
        <taxon>Gammaproteobacteria</taxon>
        <taxon>Aeromonadales</taxon>
        <taxon>Aeromonadaceae</taxon>
        <taxon>Aeromonas</taxon>
    </lineage>
</organism>
<sequence length="530" mass="56834">MEQARPIRRALLSVSDKTGILEFAKALNERGVALLSTGGTAKLLGDAGLPVTEVSDYTGFPEMMDGRVKTLHPKVHGGILGRRDQDDAIMAQHNIYPIDMVVVNLYPFAATVAKAGCSLADAVENIDIGGPTMVRSAAKNHKDVAIVVKAADYARVIAEMDANGNSLKLATRFDLAIAAFEHTAAYDGMIANYFGTMVPSYGDNKEGDAESRFPRTFNSQFIKKQDMRYGENSHQAAAFYAEEHATPGSVSSAIQLQGKALSYNNIADTDAALECVKEFSEPACVIVKHANPCGVAIGDDLLTAYDRAYQTDPTSAFGGIIAFNRELDGATAAAIVARQFVEVIIAPSVSQEARDVVAAKQNVRLLECGQWTAPAQGFDLKRVNGGLLIQERDFGMVTQGDLKVVSKRQPTEAELKDLLFCWKVAKFVKSNAIVYAKEGQTIGVGAGQMSRVYSAKIAGIKAEDEGLTVAGSVMASDAFFPFRDGIDAAAAAGISCVIQPGGSMRDQEVIDAADEHGMTMVFTNMRHFRH</sequence>